<name>YQGF_KLEP3</name>
<accession>B5XUA1</accession>
<gene>
    <name evidence="1" type="primary">yqgF</name>
    <name type="ordered locus">KPK_0727</name>
</gene>
<sequence>MSGTFLGFDFGTKSIGVAVGQRITATARPLPALKAQDGKPDWNVIEKLLKEWQPEAVIVGLPLNMDGTEQPLTARARNFANKIHGRFGVAIVLHDERLSTVEARAGLFEHGGYRALNKGSVDSASAVVILESYFEQSF</sequence>
<reference key="1">
    <citation type="journal article" date="2008" name="PLoS Genet.">
        <title>Complete genome sequence of the N2-fixing broad host range endophyte Klebsiella pneumoniae 342 and virulence predictions verified in mice.</title>
        <authorList>
            <person name="Fouts D.E."/>
            <person name="Tyler H.L."/>
            <person name="DeBoy R.T."/>
            <person name="Daugherty S."/>
            <person name="Ren Q."/>
            <person name="Badger J.H."/>
            <person name="Durkin A.S."/>
            <person name="Huot H."/>
            <person name="Shrivastava S."/>
            <person name="Kothari S."/>
            <person name="Dodson R.J."/>
            <person name="Mohamoud Y."/>
            <person name="Khouri H."/>
            <person name="Roesch L.F.W."/>
            <person name="Krogfelt K.A."/>
            <person name="Struve C."/>
            <person name="Triplett E.W."/>
            <person name="Methe B.A."/>
        </authorList>
    </citation>
    <scope>NUCLEOTIDE SEQUENCE [LARGE SCALE GENOMIC DNA]</scope>
    <source>
        <strain>342</strain>
    </source>
</reference>
<proteinExistence type="inferred from homology"/>
<evidence type="ECO:0000255" key="1">
    <source>
        <dbReference type="HAMAP-Rule" id="MF_00651"/>
    </source>
</evidence>
<feature type="chain" id="PRO_1000131042" description="Putative pre-16S rRNA nuclease">
    <location>
        <begin position="1"/>
        <end position="138"/>
    </location>
</feature>
<organism>
    <name type="scientific">Klebsiella pneumoniae (strain 342)</name>
    <dbReference type="NCBI Taxonomy" id="507522"/>
    <lineage>
        <taxon>Bacteria</taxon>
        <taxon>Pseudomonadati</taxon>
        <taxon>Pseudomonadota</taxon>
        <taxon>Gammaproteobacteria</taxon>
        <taxon>Enterobacterales</taxon>
        <taxon>Enterobacteriaceae</taxon>
        <taxon>Klebsiella/Raoultella group</taxon>
        <taxon>Klebsiella</taxon>
        <taxon>Klebsiella pneumoniae complex</taxon>
    </lineage>
</organism>
<dbReference type="EC" id="3.1.-.-" evidence="1"/>
<dbReference type="EMBL" id="CP000964">
    <property type="protein sequence ID" value="ACI07983.1"/>
    <property type="molecule type" value="Genomic_DNA"/>
</dbReference>
<dbReference type="SMR" id="B5XUA1"/>
<dbReference type="KEGG" id="kpe:KPK_0727"/>
<dbReference type="HOGENOM" id="CLU_098240_3_0_6"/>
<dbReference type="Proteomes" id="UP000001734">
    <property type="component" value="Chromosome"/>
</dbReference>
<dbReference type="GO" id="GO:0005829">
    <property type="term" value="C:cytosol"/>
    <property type="evidence" value="ECO:0007669"/>
    <property type="project" value="TreeGrafter"/>
</dbReference>
<dbReference type="GO" id="GO:0004518">
    <property type="term" value="F:nuclease activity"/>
    <property type="evidence" value="ECO:0007669"/>
    <property type="project" value="UniProtKB-KW"/>
</dbReference>
<dbReference type="GO" id="GO:0000967">
    <property type="term" value="P:rRNA 5'-end processing"/>
    <property type="evidence" value="ECO:0007669"/>
    <property type="project" value="UniProtKB-UniRule"/>
</dbReference>
<dbReference type="CDD" id="cd16964">
    <property type="entry name" value="YqgF"/>
    <property type="match status" value="1"/>
</dbReference>
<dbReference type="FunFam" id="3.30.420.140:FF:000002">
    <property type="entry name" value="Putative pre-16S rRNA nuclease"/>
    <property type="match status" value="1"/>
</dbReference>
<dbReference type="Gene3D" id="3.30.420.140">
    <property type="entry name" value="YqgF/RNase H-like domain"/>
    <property type="match status" value="1"/>
</dbReference>
<dbReference type="HAMAP" id="MF_00651">
    <property type="entry name" value="Nuclease_YqgF"/>
    <property type="match status" value="1"/>
</dbReference>
<dbReference type="InterPro" id="IPR012337">
    <property type="entry name" value="RNaseH-like_sf"/>
</dbReference>
<dbReference type="InterPro" id="IPR005227">
    <property type="entry name" value="YqgF"/>
</dbReference>
<dbReference type="InterPro" id="IPR006641">
    <property type="entry name" value="YqgF/RNaseH-like_dom"/>
</dbReference>
<dbReference type="InterPro" id="IPR037027">
    <property type="entry name" value="YqgF/RNaseH-like_dom_sf"/>
</dbReference>
<dbReference type="NCBIfam" id="TIGR00250">
    <property type="entry name" value="RNAse_H_YqgF"/>
    <property type="match status" value="1"/>
</dbReference>
<dbReference type="PANTHER" id="PTHR33317">
    <property type="entry name" value="POLYNUCLEOTIDYL TRANSFERASE, RIBONUCLEASE H-LIKE SUPERFAMILY PROTEIN"/>
    <property type="match status" value="1"/>
</dbReference>
<dbReference type="PANTHER" id="PTHR33317:SF4">
    <property type="entry name" value="POLYNUCLEOTIDYL TRANSFERASE, RIBONUCLEASE H-LIKE SUPERFAMILY PROTEIN"/>
    <property type="match status" value="1"/>
</dbReference>
<dbReference type="Pfam" id="PF03652">
    <property type="entry name" value="RuvX"/>
    <property type="match status" value="1"/>
</dbReference>
<dbReference type="SMART" id="SM00732">
    <property type="entry name" value="YqgFc"/>
    <property type="match status" value="1"/>
</dbReference>
<dbReference type="SUPFAM" id="SSF53098">
    <property type="entry name" value="Ribonuclease H-like"/>
    <property type="match status" value="1"/>
</dbReference>
<protein>
    <recommendedName>
        <fullName evidence="1">Putative pre-16S rRNA nuclease</fullName>
        <ecNumber evidence="1">3.1.-.-</ecNumber>
    </recommendedName>
</protein>
<keyword id="KW-0963">Cytoplasm</keyword>
<keyword id="KW-0378">Hydrolase</keyword>
<keyword id="KW-0540">Nuclease</keyword>
<keyword id="KW-0690">Ribosome biogenesis</keyword>
<comment type="function">
    <text evidence="1">Could be a nuclease involved in processing of the 5'-end of pre-16S rRNA.</text>
</comment>
<comment type="subcellular location">
    <subcellularLocation>
        <location evidence="1">Cytoplasm</location>
    </subcellularLocation>
</comment>
<comment type="similarity">
    <text evidence="1">Belongs to the YqgF nuclease family.</text>
</comment>